<organism>
    <name type="scientific">Cohnella laeviribosi</name>
    <dbReference type="NCBI Taxonomy" id="380174"/>
    <lineage>
        <taxon>Bacteria</taxon>
        <taxon>Bacillati</taxon>
        <taxon>Bacillota</taxon>
        <taxon>Bacilli</taxon>
        <taxon>Bacillales</taxon>
        <taxon>Paenibacillaceae</taxon>
        <taxon>Cohnella</taxon>
    </lineage>
</organism>
<dbReference type="EC" id="5.3.1.15" evidence="2"/>
<dbReference type="EMBL" id="DQ978225">
    <property type="protein sequence ID" value="ABI93960.1"/>
    <property type="molecule type" value="Genomic_DNA"/>
</dbReference>
<dbReference type="SMR" id="A3E7Z6"/>
<dbReference type="BRENDA" id="5.3.1.15">
    <property type="organism ID" value="9328"/>
</dbReference>
<dbReference type="SABIO-RK" id="A3E7Z6"/>
<dbReference type="GO" id="GO:0047828">
    <property type="term" value="F:D-lyxose ketol-isomerase activity"/>
    <property type="evidence" value="ECO:0000314"/>
    <property type="project" value="UniProtKB"/>
</dbReference>
<dbReference type="GO" id="GO:0030145">
    <property type="term" value="F:manganese ion binding"/>
    <property type="evidence" value="ECO:0000314"/>
    <property type="project" value="UniProtKB"/>
</dbReference>
<dbReference type="GO" id="GO:0005975">
    <property type="term" value="P:carbohydrate metabolic process"/>
    <property type="evidence" value="ECO:0000314"/>
    <property type="project" value="UniProtKB"/>
</dbReference>
<dbReference type="CDD" id="cd20308">
    <property type="entry name" value="cupin_YdaE"/>
    <property type="match status" value="1"/>
</dbReference>
<dbReference type="Gene3D" id="2.60.120.10">
    <property type="entry name" value="Jelly Rolls"/>
    <property type="match status" value="1"/>
</dbReference>
<dbReference type="InterPro" id="IPR010864">
    <property type="entry name" value="D-lyxose_isomer"/>
</dbReference>
<dbReference type="InterPro" id="IPR014710">
    <property type="entry name" value="RmlC-like_jellyroll"/>
</dbReference>
<dbReference type="InterPro" id="IPR011051">
    <property type="entry name" value="RmlC_Cupin_sf"/>
</dbReference>
<dbReference type="Pfam" id="PF07385">
    <property type="entry name" value="Lyx_isomer"/>
    <property type="match status" value="1"/>
</dbReference>
<dbReference type="SUPFAM" id="SSF51182">
    <property type="entry name" value="RmlC-like cupins"/>
    <property type="match status" value="1"/>
</dbReference>
<keyword id="KW-0119">Carbohydrate metabolism</keyword>
<keyword id="KW-0903">Direct protein sequencing</keyword>
<keyword id="KW-0413">Isomerase</keyword>
<keyword id="KW-0464">Manganese</keyword>
<keyword id="KW-0479">Metal-binding</keyword>
<sequence>MRGTEWREARDRVAEMFRKAGIALTPSELEKVEVADFGLGNLAVQGLQLVTYINTDRYCAKELALFPHQTCPEHLHPPVGGDPGKMETFRCRWGKVFLYVEGEPAASVQAAVPPGSEAYYTVFHEIVLTPGEQYTIPPGTKHWFQGGPEGAIVSEFSSTSRDEFDIFTDPKVERMPVIEFDD</sequence>
<name>DLYKI_COHLA</name>
<evidence type="ECO:0000250" key="1">
    <source>
        <dbReference type="UniProtKB" id="A0A256XLS3"/>
    </source>
</evidence>
<evidence type="ECO:0000269" key="2">
    <source>
    </source>
</evidence>
<evidence type="ECO:0000303" key="3">
    <source>
    </source>
</evidence>
<evidence type="ECO:0000305" key="4"/>
<evidence type="ECO:0000312" key="5">
    <source>
        <dbReference type="EMBL" id="ABI93960.1"/>
    </source>
</evidence>
<proteinExistence type="evidence at protein level"/>
<feature type="chain" id="PRO_0000352785" description="D-lyxose ketol-isomerase">
    <location>
        <begin position="1"/>
        <end position="182"/>
    </location>
</feature>
<feature type="binding site" evidence="1">
    <location>
        <position position="74"/>
    </location>
    <ligand>
        <name>Mn(2+)</name>
        <dbReference type="ChEBI" id="CHEBI:29035"/>
    </ligand>
</feature>
<feature type="binding site" evidence="1">
    <location>
        <position position="76"/>
    </location>
    <ligand>
        <name>Mn(2+)</name>
        <dbReference type="ChEBI" id="CHEBI:29035"/>
    </ligand>
</feature>
<feature type="binding site" evidence="1">
    <location>
        <position position="87"/>
    </location>
    <ligand>
        <name>Mn(2+)</name>
        <dbReference type="ChEBI" id="CHEBI:29035"/>
    </ligand>
</feature>
<feature type="binding site" evidence="1">
    <location>
        <position position="142"/>
    </location>
    <ligand>
        <name>Mn(2+)</name>
        <dbReference type="ChEBI" id="CHEBI:29035"/>
    </ligand>
</feature>
<accession>A3E7Z6</accession>
<reference evidence="4 5" key="1">
    <citation type="journal article" date="2007" name="J. Bacteriol.">
        <title>Characterization of a novel D-lyxose isomerase from Cohnella laevoribosii RI-39 sp. nov.</title>
        <authorList>
            <person name="Cho E.-A."/>
            <person name="Lee D.-W."/>
            <person name="Cha Y.-H."/>
            <person name="Lee S.-J."/>
            <person name="Jung H.-C."/>
            <person name="Pan J.-G."/>
            <person name="Pyun Y.-R."/>
        </authorList>
    </citation>
    <scope>NUCLEOTIDE SEQUENCE [GENOMIC DNA]</scope>
    <scope>PROTEIN SEQUENCE OF 1-13; 23-31; 44-57 AND 153-160</scope>
    <scope>FUNCTION</scope>
    <scope>CATALYTIC ACTIVITY</scope>
    <scope>COFACTOR</scope>
    <scope>BIOPHYSICOCHEMICAL PROPERTIES</scope>
    <scope>SUBUNIT</scope>
    <source>
        <strain>KCTC 3987 / CCUG 52217 / RI-39</strain>
    </source>
</reference>
<protein>
    <recommendedName>
        <fullName evidence="3">D-lyxose ketol-isomerase</fullName>
        <ecNumber evidence="2">5.3.1.15</ecNumber>
    </recommendedName>
    <alternativeName>
        <fullName evidence="3 5">D-lyxose isomerase</fullName>
    </alternativeName>
    <alternativeName>
        <fullName evidence="3">L-ribose isomerase</fullName>
    </alternativeName>
</protein>
<comment type="function">
    <text evidence="2">Sugar isomerase that catalyzes the reversible isomerization of D-lyxose to D-xylulose (PubMed:17189362). Shows weak activity with D-mannose and L-ribose (PubMed:17189362).</text>
</comment>
<comment type="catalytic activity">
    <reaction evidence="2">
        <text>D-lyxose = D-xylulose</text>
        <dbReference type="Rhea" id="RHEA:14201"/>
        <dbReference type="ChEBI" id="CHEBI:16789"/>
        <dbReference type="ChEBI" id="CHEBI:17140"/>
        <dbReference type="EC" id="5.3.1.15"/>
    </reaction>
</comment>
<comment type="cofactor">
    <cofactor evidence="2">
        <name>Mn(2+)</name>
        <dbReference type="ChEBI" id="CHEBI:29035"/>
    </cofactor>
</comment>
<comment type="biophysicochemical properties">
    <kinetics>
        <KM evidence="2">22.4 mM for D-lyxose (in the presence of 1 mM Mn(2+))</KM>
        <KM evidence="2">121.7 mM for L-ribose (in the presence of 1 mM Mn(2+))</KM>
        <KM evidence="2">34 mM for D-mannose (in the presence of 1 mM Mn(2+))</KM>
        <Vmax evidence="2">5434.8 umol/min/mg enzyme toward D-lyxose (in the presence of 1 mM Mn(2+))</Vmax>
        <Vmax evidence="2">75.5 umol/min/mg enzyme toward L-ribose (in the presence of 1 mM Mn(2+))</Vmax>
        <Vmax evidence="2">131.8 umol/min/mg enzyme toward D-mannose (in the presence of 1 mM Mn(2+))</Vmax>
    </kinetics>
    <phDependence>
        <text evidence="2">Optimum pH is 6.5.</text>
    </phDependence>
    <temperatureDependence>
        <text evidence="2">Optimum temperature is 70 degrees Celsius.</text>
    </temperatureDependence>
</comment>
<comment type="subunit">
    <text evidence="2">Homodimer.</text>
</comment>
<comment type="similarity">
    <text evidence="4">Belongs to the D-lyxose ketol-isomerase family.</text>
</comment>